<protein>
    <recommendedName>
        <fullName evidence="1">Hemagglutinin</fullName>
    </recommendedName>
    <component>
        <recommendedName>
            <fullName evidence="1">Hemagglutinin HA1 chain</fullName>
        </recommendedName>
    </component>
    <component>
        <recommendedName>
            <fullName evidence="1">Hemagglutinin HA2 chain</fullName>
        </recommendedName>
    </component>
</protein>
<name>HEMA_I78A7</name>
<comment type="function">
    <text evidence="1">Binds to sialic acid-containing receptors on the cell surface, bringing about the attachment of the virus particle to the cell. This attachment induces virion internalization either through clathrin-dependent endocytosis or through clathrin- and caveolin-independent pathway. Plays a major role in the determination of host range restriction and virulence. Class I viral fusion protein. Responsible for penetration of the virus into the cell cytoplasm by mediating the fusion of the membrane of the endocytosed virus particle with the endosomal membrane. Low pH in endosomes induces an irreversible conformational change in HA2, releasing the fusion hydrophobic peptide. Several trimers are required to form a competent fusion pore.</text>
</comment>
<comment type="subunit">
    <text evidence="1">Homotrimer of disulfide-linked HA1-HA2.</text>
</comment>
<comment type="subcellular location">
    <subcellularLocation>
        <location evidence="1">Virion membrane</location>
        <topology evidence="1">Single-pass type I membrane protein</topology>
    </subcellularLocation>
    <subcellularLocation>
        <location evidence="1">Host apical cell membrane</location>
        <topology evidence="1">Single-pass type I membrane protein</topology>
    </subcellularLocation>
    <text evidence="1">Targeted to the apical plasma membrane in epithelial polarized cells through a signal present in the transmembrane domain. Associated with glycosphingolipid- and cholesterol-enriched detergent-resistant lipid rafts.</text>
</comment>
<comment type="PTM">
    <text evidence="1">Palmitoylated.</text>
</comment>
<comment type="PTM">
    <text evidence="1">In natural infection, inactive HA is matured into HA1 and HA2 outside the cell by one or more trypsin-like, arginine-specific endoprotease secreted by the bronchial epithelial cells. One identified protease that may be involved in this process is secreted in lungs by club cells.</text>
</comment>
<comment type="miscellaneous">
    <text>Major glycoprotein, comprises over 80% of the envelope proteins present in virus particle.</text>
</comment>
<comment type="miscellaneous">
    <text>The extent of infection into host organism is determined by HA. Influenza viruses bud from the apical surface of polarized epithelial cells (e.g. bronchial epithelial cells) into lumen of lungs and are therefore usually pneumotropic. The reason is that HA is cleaved by tryptase clara which is restricted to lungs. However, HAs of H5 and H7 pantropic avian viruses subtypes can be cleaved by furin and subtilisin-type enzymes, allowing the virus to grow in other organs than lungs.</text>
</comment>
<comment type="miscellaneous">
    <text evidence="2">The influenza A genome consist of 8 RNA segments. Genetic variation of hemagglutinin and/or neuraminidase genes results in the emergence of new influenza strains. The mechanism of variation can be the result of point mutations or the result of genetic reassortment between segments of two different strains.</text>
</comment>
<comment type="similarity">
    <text evidence="1">Belongs to the influenza viruses hemagglutinin family.</text>
</comment>
<keyword id="KW-1167">Clathrin- and caveolin-independent endocytosis of virus by host</keyword>
<keyword id="KW-1165">Clathrin-mediated endocytosis of virus by host</keyword>
<keyword id="KW-1015">Disulfide bond</keyword>
<keyword id="KW-1170">Fusion of virus membrane with host endosomal membrane</keyword>
<keyword id="KW-1168">Fusion of virus membrane with host membrane</keyword>
<keyword id="KW-0325">Glycoprotein</keyword>
<keyword id="KW-0348">Hemagglutinin</keyword>
<keyword id="KW-1032">Host cell membrane</keyword>
<keyword id="KW-1043">Host membrane</keyword>
<keyword id="KW-0945">Host-virus interaction</keyword>
<keyword id="KW-0449">Lipoprotein</keyword>
<keyword id="KW-0472">Membrane</keyword>
<keyword id="KW-0564">Palmitate</keyword>
<keyword id="KW-0732">Signal</keyword>
<keyword id="KW-0812">Transmembrane</keyword>
<keyword id="KW-1133">Transmembrane helix</keyword>
<keyword id="KW-1161">Viral attachment to host cell</keyword>
<keyword id="KW-0261">Viral envelope protein</keyword>
<keyword id="KW-1162">Viral penetration into host cytoplasm</keyword>
<keyword id="KW-0946">Virion</keyword>
<keyword id="KW-1164">Virus endocytosis by host</keyword>
<keyword id="KW-1160">Virus entry into host cell</keyword>
<organismHost>
    <name type="scientific">Aves</name>
    <dbReference type="NCBI Taxonomy" id="8782"/>
</organismHost>
<organismHost>
    <name type="scientific">Cetacea</name>
    <name type="common">whales</name>
    <dbReference type="NCBI Taxonomy" id="9721"/>
</organismHost>
<organismHost>
    <name type="scientific">Homo sapiens</name>
    <name type="common">Human</name>
    <dbReference type="NCBI Taxonomy" id="9606"/>
</organismHost>
<organismHost>
    <name type="scientific">Phocidae</name>
    <name type="common">true seals</name>
    <dbReference type="NCBI Taxonomy" id="9709"/>
</organismHost>
<organismHost>
    <name type="scientific">Sus scrofa</name>
    <name type="common">Pig</name>
    <dbReference type="NCBI Taxonomy" id="9823"/>
</organismHost>
<sequence length="566" mass="63671">MKTIIALSYIFCQVFAQNLPGNDNSTATLCLGHHAVPNGTLVKTITNDQIEVTNATELVQSSSTGRICDNPHRILDGKNCTLIDALLGDPHCDGFQNEKWDLFVERSKAFSNCYPYDVPDYASLRSLVASSGTLEFFNEGFNWTGVTQNGGSYACKRGPDNSFFSRLNWLYKSESTYPVLNVTMPNNDNFDKLYIWGVHHPSTDKEQTNLYVQASGRVTVSTKRSQQTIIPNVGPRPWVRGLSSRISIYWTIVKPGDVLLINSNGNLIAPRGYFKIRTGKSSIMRSDAPIGTCSSECITPNGSIPNDKPFQNVNKITYGACPKYVKQNTLKLATGMRNVPEKQTRGIFGAIAGFIENGWEGMIDGWYGFRHQNSEGTGQAADLKSTQAAIDQINGKLNRVIEKTNEKFHQIEKEFSEVEGRIQDLEKYVEDTKIDLWSYNAELLVALENQHTIDLTDSEMNKLFEKTRRQLRENAEDMGNGCFKIYHKCDNACIGSIRNGTYDHDVYRDEALNNRFQIKGVELKSGYKDWILWISFAISCFLLCVVLLGFIMWACQKGNIRCNICI</sequence>
<dbReference type="EMBL" id="CY006691">
    <property type="protein sequence ID" value="ABB96319.1"/>
    <property type="molecule type" value="Genomic_RNA"/>
</dbReference>
<dbReference type="SMR" id="Q2VNF2"/>
<dbReference type="GlyCosmos" id="Q2VNF2">
    <property type="glycosylation" value="8 sites, No reported glycans"/>
</dbReference>
<dbReference type="Proteomes" id="UP000007555">
    <property type="component" value="Genome"/>
</dbReference>
<dbReference type="GO" id="GO:0020002">
    <property type="term" value="C:host cell plasma membrane"/>
    <property type="evidence" value="ECO:0007669"/>
    <property type="project" value="UniProtKB-SubCell"/>
</dbReference>
<dbReference type="GO" id="GO:0016020">
    <property type="term" value="C:membrane"/>
    <property type="evidence" value="ECO:0007669"/>
    <property type="project" value="UniProtKB-UniRule"/>
</dbReference>
<dbReference type="GO" id="GO:0019031">
    <property type="term" value="C:viral envelope"/>
    <property type="evidence" value="ECO:0007669"/>
    <property type="project" value="UniProtKB-UniRule"/>
</dbReference>
<dbReference type="GO" id="GO:0055036">
    <property type="term" value="C:virion membrane"/>
    <property type="evidence" value="ECO:0007669"/>
    <property type="project" value="UniProtKB-SubCell"/>
</dbReference>
<dbReference type="GO" id="GO:0046789">
    <property type="term" value="F:host cell surface receptor binding"/>
    <property type="evidence" value="ECO:0007669"/>
    <property type="project" value="UniProtKB-UniRule"/>
</dbReference>
<dbReference type="GO" id="GO:0075512">
    <property type="term" value="P:clathrin-dependent endocytosis of virus by host cell"/>
    <property type="evidence" value="ECO:0007669"/>
    <property type="project" value="UniProtKB-UniRule"/>
</dbReference>
<dbReference type="GO" id="GO:0039654">
    <property type="term" value="P:fusion of virus membrane with host endosome membrane"/>
    <property type="evidence" value="ECO:0007669"/>
    <property type="project" value="UniProtKB-UniRule"/>
</dbReference>
<dbReference type="GO" id="GO:0019064">
    <property type="term" value="P:fusion of virus membrane with host plasma membrane"/>
    <property type="evidence" value="ECO:0007669"/>
    <property type="project" value="InterPro"/>
</dbReference>
<dbReference type="GO" id="GO:0046761">
    <property type="term" value="P:viral budding from plasma membrane"/>
    <property type="evidence" value="ECO:0007669"/>
    <property type="project" value="UniProtKB-UniRule"/>
</dbReference>
<dbReference type="GO" id="GO:0019062">
    <property type="term" value="P:virion attachment to host cell"/>
    <property type="evidence" value="ECO:0007669"/>
    <property type="project" value="UniProtKB-KW"/>
</dbReference>
<dbReference type="FunFam" id="3.90.20.10:FF:000001">
    <property type="entry name" value="Hemagglutinin"/>
    <property type="match status" value="1"/>
</dbReference>
<dbReference type="FunFam" id="3.90.209.20:FF:000001">
    <property type="entry name" value="Hemagglutinin"/>
    <property type="match status" value="1"/>
</dbReference>
<dbReference type="Gene3D" id="3.90.20.10">
    <property type="match status" value="1"/>
</dbReference>
<dbReference type="Gene3D" id="3.90.209.20">
    <property type="match status" value="1"/>
</dbReference>
<dbReference type="HAMAP" id="MF_04072">
    <property type="entry name" value="INFV_HEMA"/>
    <property type="match status" value="1"/>
</dbReference>
<dbReference type="InterPro" id="IPR008980">
    <property type="entry name" value="Capsid_hemagglutn"/>
</dbReference>
<dbReference type="InterPro" id="IPR013828">
    <property type="entry name" value="Hemagglutn_HA1_a/b_dom_sf"/>
</dbReference>
<dbReference type="InterPro" id="IPR000149">
    <property type="entry name" value="Hemagglutn_influenz_A"/>
</dbReference>
<dbReference type="InterPro" id="IPR001364">
    <property type="entry name" value="Hemagglutn_influenz_A/B"/>
</dbReference>
<dbReference type="Pfam" id="PF00509">
    <property type="entry name" value="Hemagglutinin"/>
    <property type="match status" value="1"/>
</dbReference>
<dbReference type="PRINTS" id="PR00330">
    <property type="entry name" value="HEMAGGLUTN1"/>
</dbReference>
<dbReference type="PRINTS" id="PR00329">
    <property type="entry name" value="HEMAGGLUTN12"/>
</dbReference>
<dbReference type="SUPFAM" id="SSF58064">
    <property type="entry name" value="Influenza hemagglutinin (stalk)"/>
    <property type="match status" value="1"/>
</dbReference>
<dbReference type="SUPFAM" id="SSF49818">
    <property type="entry name" value="Viral protein domain"/>
    <property type="match status" value="1"/>
</dbReference>
<organism>
    <name type="scientific">Influenza A virus (strain A/Memphis/2/1978 H3N2)</name>
    <dbReference type="NCBI Taxonomy" id="383580"/>
    <lineage>
        <taxon>Viruses</taxon>
        <taxon>Riboviria</taxon>
        <taxon>Orthornavirae</taxon>
        <taxon>Negarnaviricota</taxon>
        <taxon>Polyploviricotina</taxon>
        <taxon>Insthoviricetes</taxon>
        <taxon>Articulavirales</taxon>
        <taxon>Orthomyxoviridae</taxon>
        <taxon>Alphainfluenzavirus</taxon>
        <taxon>Alphainfluenzavirus influenzae</taxon>
        <taxon>Influenza A virus</taxon>
    </lineage>
</organism>
<reference key="1">
    <citation type="submission" date="2005-12" db="EMBL/GenBank/DDBJ databases">
        <title>The NIAID influenza genome sequencing project.</title>
        <authorList>
            <person name="Ghedin E."/>
            <person name="Spiro D."/>
            <person name="Miller N."/>
            <person name="Zaborsky J."/>
            <person name="Feldblyum T."/>
            <person name="Subbu V."/>
            <person name="Shumway M."/>
            <person name="Sparenborg J."/>
            <person name="Groveman L."/>
            <person name="Halpin R."/>
            <person name="Sitz J."/>
            <person name="Koo H."/>
            <person name="Salzberg S.L."/>
            <person name="Webster R.G."/>
            <person name="Hoffmann E."/>
            <person name="Krauss S."/>
            <person name="Naeve C."/>
            <person name="Bao Y."/>
            <person name="Bolotov P."/>
            <person name="Dernovoy D."/>
            <person name="Kiryutin B."/>
            <person name="Lipman D.J."/>
            <person name="Tatusova T."/>
        </authorList>
    </citation>
    <scope>NUCLEOTIDE SEQUENCE [GENOMIC RNA]</scope>
</reference>
<feature type="signal peptide" evidence="1">
    <location>
        <begin position="1"/>
        <end position="16"/>
    </location>
</feature>
<feature type="chain" id="PRO_0000440475" description="Hemagglutinin" evidence="1">
    <location>
        <begin position="17"/>
        <end position="566"/>
    </location>
</feature>
<feature type="chain" id="PRO_5000135900" description="Hemagglutinin HA1 chain">
    <location>
        <begin position="17"/>
        <end position="344"/>
    </location>
</feature>
<feature type="chain" id="PRO_5000135901" description="Hemagglutinin HA2 chain" evidence="1">
    <location>
        <begin position="346"/>
        <end position="566"/>
    </location>
</feature>
<feature type="topological domain" description="Extracellular" evidence="1">
    <location>
        <begin position="17"/>
        <end position="530"/>
    </location>
</feature>
<feature type="transmembrane region" description="Helical" evidence="1">
    <location>
        <begin position="531"/>
        <end position="551"/>
    </location>
</feature>
<feature type="topological domain" description="Cytoplasmic" evidence="1">
    <location>
        <begin position="552"/>
        <end position="566"/>
    </location>
</feature>
<feature type="site" description="Cleavage; by host" evidence="1">
    <location>
        <begin position="345"/>
        <end position="346"/>
    </location>
</feature>
<feature type="lipid moiety-binding region" description="S-palmitoyl cysteine; by host" evidence="1">
    <location>
        <position position="555"/>
    </location>
</feature>
<feature type="lipid moiety-binding region" description="S-palmitoyl cysteine; by host" evidence="1">
    <location>
        <position position="562"/>
    </location>
</feature>
<feature type="lipid moiety-binding region" description="S-palmitoyl cysteine; by host" evidence="1">
    <location>
        <position position="565"/>
    </location>
</feature>
<feature type="glycosylation site" description="N-linked (GlcNAc...) asparagine; by host" evidence="1">
    <location>
        <position position="24"/>
    </location>
</feature>
<feature type="glycosylation site" description="N-linked (GlcNAc...) asparagine; by host" evidence="1">
    <location>
        <position position="38"/>
    </location>
</feature>
<feature type="glycosylation site" description="N-linked (GlcNAc...) asparagine; by host" evidence="1">
    <location>
        <position position="54"/>
    </location>
</feature>
<feature type="glycosylation site" description="N-linked (GlcNAc...) asparagine; by host" evidence="1">
    <location>
        <position position="79"/>
    </location>
</feature>
<feature type="glycosylation site" description="N-linked (GlcNAc...) asparagine; by host" evidence="1">
    <location>
        <position position="142"/>
    </location>
</feature>
<feature type="glycosylation site" description="N-linked (GlcNAc...) asparagine; by host" evidence="1">
    <location>
        <position position="181"/>
    </location>
</feature>
<feature type="glycosylation site" description="N-linked (GlcNAc...) asparagine; by host" evidence="1">
    <location>
        <position position="301"/>
    </location>
</feature>
<feature type="glycosylation site" description="N-linked (GlcNAc...) asparagine; by host" evidence="1">
    <location>
        <position position="499"/>
    </location>
</feature>
<feature type="disulfide bond" description="Interchain (between HA1 and HA2 chains)" evidence="1">
    <location>
        <begin position="30"/>
        <end position="482"/>
    </location>
</feature>
<feature type="disulfide bond" evidence="1">
    <location>
        <begin position="68"/>
        <end position="293"/>
    </location>
</feature>
<feature type="disulfide bond" evidence="1">
    <location>
        <begin position="80"/>
        <end position="92"/>
    </location>
</feature>
<feature type="disulfide bond" evidence="1">
    <location>
        <begin position="113"/>
        <end position="155"/>
    </location>
</feature>
<feature type="disulfide bond" evidence="1">
    <location>
        <begin position="297"/>
        <end position="321"/>
    </location>
</feature>
<feature type="disulfide bond" evidence="1">
    <location>
        <begin position="489"/>
        <end position="493"/>
    </location>
</feature>
<gene>
    <name evidence="1" type="primary">HA</name>
</gene>
<proteinExistence type="inferred from homology"/>
<evidence type="ECO:0000255" key="1">
    <source>
        <dbReference type="HAMAP-Rule" id="MF_04072"/>
    </source>
</evidence>
<evidence type="ECO:0000305" key="2"/>
<accession>Q2VNF2</accession>